<comment type="function">
    <text evidence="1">Involved in DNA repair and RecF pathway recombination.</text>
</comment>
<comment type="subunit">
    <text evidence="1">Monomer.</text>
</comment>
<comment type="similarity">
    <text evidence="1">Belongs to the RecO family.</text>
</comment>
<proteinExistence type="inferred from homology"/>
<dbReference type="EMBL" id="CU928161">
    <property type="protein sequence ID" value="CAR04002.1"/>
    <property type="molecule type" value="Genomic_DNA"/>
</dbReference>
<dbReference type="RefSeq" id="WP_000399404.1">
    <property type="nucleotide sequence ID" value="NC_011742.1"/>
</dbReference>
<dbReference type="SMR" id="B7MIQ0"/>
<dbReference type="KEGG" id="ecz:ECS88_2738"/>
<dbReference type="HOGENOM" id="CLU_066645_1_0_6"/>
<dbReference type="Proteomes" id="UP000000747">
    <property type="component" value="Chromosome"/>
</dbReference>
<dbReference type="GO" id="GO:0043590">
    <property type="term" value="C:bacterial nucleoid"/>
    <property type="evidence" value="ECO:0007669"/>
    <property type="project" value="TreeGrafter"/>
</dbReference>
<dbReference type="GO" id="GO:0006310">
    <property type="term" value="P:DNA recombination"/>
    <property type="evidence" value="ECO:0007669"/>
    <property type="project" value="UniProtKB-UniRule"/>
</dbReference>
<dbReference type="GO" id="GO:0006302">
    <property type="term" value="P:double-strand break repair"/>
    <property type="evidence" value="ECO:0007669"/>
    <property type="project" value="TreeGrafter"/>
</dbReference>
<dbReference type="FunFam" id="1.20.1440.120:FF:000001">
    <property type="entry name" value="DNA repair protein RecO"/>
    <property type="match status" value="1"/>
</dbReference>
<dbReference type="FunFam" id="2.40.50.140:FF:000074">
    <property type="entry name" value="DNA repair protein RecO"/>
    <property type="match status" value="1"/>
</dbReference>
<dbReference type="Gene3D" id="2.40.50.140">
    <property type="entry name" value="Nucleic acid-binding proteins"/>
    <property type="match status" value="1"/>
</dbReference>
<dbReference type="Gene3D" id="1.20.1440.120">
    <property type="entry name" value="Recombination protein O, C-terminal domain"/>
    <property type="match status" value="1"/>
</dbReference>
<dbReference type="HAMAP" id="MF_00201">
    <property type="entry name" value="RecO"/>
    <property type="match status" value="1"/>
</dbReference>
<dbReference type="InterPro" id="IPR037278">
    <property type="entry name" value="ARFGAP/RecO"/>
</dbReference>
<dbReference type="InterPro" id="IPR022572">
    <property type="entry name" value="DNA_rep/recomb_RecO_N"/>
</dbReference>
<dbReference type="InterPro" id="IPR012340">
    <property type="entry name" value="NA-bd_OB-fold"/>
</dbReference>
<dbReference type="InterPro" id="IPR003717">
    <property type="entry name" value="RecO"/>
</dbReference>
<dbReference type="InterPro" id="IPR042242">
    <property type="entry name" value="RecO_C"/>
</dbReference>
<dbReference type="NCBIfam" id="TIGR00613">
    <property type="entry name" value="reco"/>
    <property type="match status" value="1"/>
</dbReference>
<dbReference type="PANTHER" id="PTHR33991">
    <property type="entry name" value="DNA REPAIR PROTEIN RECO"/>
    <property type="match status" value="1"/>
</dbReference>
<dbReference type="PANTHER" id="PTHR33991:SF1">
    <property type="entry name" value="DNA REPAIR PROTEIN RECO"/>
    <property type="match status" value="1"/>
</dbReference>
<dbReference type="Pfam" id="PF02565">
    <property type="entry name" value="RecO_C"/>
    <property type="match status" value="1"/>
</dbReference>
<dbReference type="Pfam" id="PF11967">
    <property type="entry name" value="RecO_N"/>
    <property type="match status" value="1"/>
</dbReference>
<dbReference type="SUPFAM" id="SSF57863">
    <property type="entry name" value="ArfGap/RecO-like zinc finger"/>
    <property type="match status" value="1"/>
</dbReference>
<dbReference type="SUPFAM" id="SSF50249">
    <property type="entry name" value="Nucleic acid-binding proteins"/>
    <property type="match status" value="1"/>
</dbReference>
<gene>
    <name evidence="1" type="primary">recO</name>
    <name type="ordered locus">ECS88_2738</name>
</gene>
<name>RECO_ECO45</name>
<protein>
    <recommendedName>
        <fullName evidence="1">DNA repair protein RecO</fullName>
    </recommendedName>
    <alternativeName>
        <fullName evidence="1">Recombination protein O</fullName>
    </alternativeName>
</protein>
<sequence length="242" mass="27391">MEGWQRAFVLHSRPWSETSLMLDVFTEESGRVRLVAKGARSKRSTLKGALQPFTPLLLRFGGRGEVKTLRSAEAVSLALPLSGITLYSGLYINELLSRVLEYETRFSELFFDYLHCIQSLAGVTGTPEPALRRFELALLGHLGYGVNFTHCAGSGEPVDDTMTYRYREEKGFIASVVIDNKTFTGRQLKALNAREFPDADTLRAAKRFTRMALKPYLGGKPLKSRELFRQFMPKRTVKTHYE</sequence>
<accession>B7MIQ0</accession>
<organism>
    <name type="scientific">Escherichia coli O45:K1 (strain S88 / ExPEC)</name>
    <dbReference type="NCBI Taxonomy" id="585035"/>
    <lineage>
        <taxon>Bacteria</taxon>
        <taxon>Pseudomonadati</taxon>
        <taxon>Pseudomonadota</taxon>
        <taxon>Gammaproteobacteria</taxon>
        <taxon>Enterobacterales</taxon>
        <taxon>Enterobacteriaceae</taxon>
        <taxon>Escherichia</taxon>
    </lineage>
</organism>
<reference key="1">
    <citation type="journal article" date="2009" name="PLoS Genet.">
        <title>Organised genome dynamics in the Escherichia coli species results in highly diverse adaptive paths.</title>
        <authorList>
            <person name="Touchon M."/>
            <person name="Hoede C."/>
            <person name="Tenaillon O."/>
            <person name="Barbe V."/>
            <person name="Baeriswyl S."/>
            <person name="Bidet P."/>
            <person name="Bingen E."/>
            <person name="Bonacorsi S."/>
            <person name="Bouchier C."/>
            <person name="Bouvet O."/>
            <person name="Calteau A."/>
            <person name="Chiapello H."/>
            <person name="Clermont O."/>
            <person name="Cruveiller S."/>
            <person name="Danchin A."/>
            <person name="Diard M."/>
            <person name="Dossat C."/>
            <person name="Karoui M.E."/>
            <person name="Frapy E."/>
            <person name="Garry L."/>
            <person name="Ghigo J.M."/>
            <person name="Gilles A.M."/>
            <person name="Johnson J."/>
            <person name="Le Bouguenec C."/>
            <person name="Lescat M."/>
            <person name="Mangenot S."/>
            <person name="Martinez-Jehanne V."/>
            <person name="Matic I."/>
            <person name="Nassif X."/>
            <person name="Oztas S."/>
            <person name="Petit M.A."/>
            <person name="Pichon C."/>
            <person name="Rouy Z."/>
            <person name="Ruf C.S."/>
            <person name="Schneider D."/>
            <person name="Tourret J."/>
            <person name="Vacherie B."/>
            <person name="Vallenet D."/>
            <person name="Medigue C."/>
            <person name="Rocha E.P.C."/>
            <person name="Denamur E."/>
        </authorList>
    </citation>
    <scope>NUCLEOTIDE SEQUENCE [LARGE SCALE GENOMIC DNA]</scope>
    <source>
        <strain>S88 / ExPEC</strain>
    </source>
</reference>
<keyword id="KW-0227">DNA damage</keyword>
<keyword id="KW-0233">DNA recombination</keyword>
<keyword id="KW-0234">DNA repair</keyword>
<keyword id="KW-1185">Reference proteome</keyword>
<evidence type="ECO:0000255" key="1">
    <source>
        <dbReference type="HAMAP-Rule" id="MF_00201"/>
    </source>
</evidence>
<feature type="chain" id="PRO_1000118716" description="DNA repair protein RecO">
    <location>
        <begin position="1"/>
        <end position="242"/>
    </location>
</feature>